<comment type="function">
    <text evidence="1">ATPase subunit of a proteasome-like degradation complex; this subunit has chaperone activity. The binding of ATP and its subsequent hydrolysis by HslU are essential for unfolding of protein substrates subsequently hydrolyzed by HslV. HslU recognizes the N-terminal part of its protein substrates and unfolds these before they are guided to HslV for hydrolysis.</text>
</comment>
<comment type="subunit">
    <text evidence="1">A double ring-shaped homohexamer of HslV is capped on each side by a ring-shaped HslU homohexamer. The assembly of the HslU/HslV complex is dependent on binding of ATP.</text>
</comment>
<comment type="subcellular location">
    <subcellularLocation>
        <location evidence="1">Cytoplasm</location>
    </subcellularLocation>
</comment>
<comment type="similarity">
    <text evidence="1">Belongs to the ClpX chaperone family. HslU subfamily.</text>
</comment>
<comment type="sequence caution" evidence="2">
    <conflict type="frameshift">
        <sequence resource="EMBL-CDS" id="CAA59020"/>
    </conflict>
</comment>
<dbReference type="EMBL" id="X84261">
    <property type="protein sequence ID" value="CAA59020.1"/>
    <property type="status" value="ALT_FRAME"/>
    <property type="molecule type" value="Genomic_DNA"/>
</dbReference>
<dbReference type="SMR" id="Q48735"/>
<dbReference type="MEROPS" id="X20.005"/>
<dbReference type="GO" id="GO:0009376">
    <property type="term" value="C:HslUV protease complex"/>
    <property type="evidence" value="ECO:0007669"/>
    <property type="project" value="UniProtKB-UniRule"/>
</dbReference>
<dbReference type="GO" id="GO:0005524">
    <property type="term" value="F:ATP binding"/>
    <property type="evidence" value="ECO:0007669"/>
    <property type="project" value="UniProtKB-UniRule"/>
</dbReference>
<dbReference type="GO" id="GO:0016887">
    <property type="term" value="F:ATP hydrolysis activity"/>
    <property type="evidence" value="ECO:0007669"/>
    <property type="project" value="InterPro"/>
</dbReference>
<dbReference type="GO" id="GO:0008233">
    <property type="term" value="F:peptidase activity"/>
    <property type="evidence" value="ECO:0007669"/>
    <property type="project" value="InterPro"/>
</dbReference>
<dbReference type="GO" id="GO:0036402">
    <property type="term" value="F:proteasome-activating activity"/>
    <property type="evidence" value="ECO:0007669"/>
    <property type="project" value="UniProtKB-UniRule"/>
</dbReference>
<dbReference type="GO" id="GO:0043335">
    <property type="term" value="P:protein unfolding"/>
    <property type="evidence" value="ECO:0007669"/>
    <property type="project" value="UniProtKB-UniRule"/>
</dbReference>
<dbReference type="GO" id="GO:0051603">
    <property type="term" value="P:proteolysis involved in protein catabolic process"/>
    <property type="evidence" value="ECO:0007669"/>
    <property type="project" value="TreeGrafter"/>
</dbReference>
<dbReference type="Gene3D" id="1.10.8.60">
    <property type="match status" value="1"/>
</dbReference>
<dbReference type="Gene3D" id="3.40.50.300">
    <property type="entry name" value="P-loop containing nucleotide triphosphate hydrolases"/>
    <property type="match status" value="2"/>
</dbReference>
<dbReference type="HAMAP" id="MF_00249">
    <property type="entry name" value="HslU"/>
    <property type="match status" value="1"/>
</dbReference>
<dbReference type="InterPro" id="IPR003593">
    <property type="entry name" value="AAA+_ATPase"/>
</dbReference>
<dbReference type="InterPro" id="IPR050052">
    <property type="entry name" value="ATP-dep_Clp_protease_ClpX"/>
</dbReference>
<dbReference type="InterPro" id="IPR003959">
    <property type="entry name" value="ATPase_AAA_core"/>
</dbReference>
<dbReference type="InterPro" id="IPR019489">
    <property type="entry name" value="Clp_ATPase_C"/>
</dbReference>
<dbReference type="InterPro" id="IPR004491">
    <property type="entry name" value="HslU"/>
</dbReference>
<dbReference type="InterPro" id="IPR027417">
    <property type="entry name" value="P-loop_NTPase"/>
</dbReference>
<dbReference type="NCBIfam" id="TIGR00390">
    <property type="entry name" value="hslU"/>
    <property type="match status" value="1"/>
</dbReference>
<dbReference type="NCBIfam" id="NF003544">
    <property type="entry name" value="PRK05201.1"/>
    <property type="match status" value="1"/>
</dbReference>
<dbReference type="PANTHER" id="PTHR48102">
    <property type="entry name" value="ATP-DEPENDENT CLP PROTEASE ATP-BINDING SUBUNIT CLPX-LIKE, MITOCHONDRIAL-RELATED"/>
    <property type="match status" value="1"/>
</dbReference>
<dbReference type="PANTHER" id="PTHR48102:SF3">
    <property type="entry name" value="ATP-DEPENDENT PROTEASE ATPASE SUBUNIT HSLU"/>
    <property type="match status" value="1"/>
</dbReference>
<dbReference type="Pfam" id="PF00004">
    <property type="entry name" value="AAA"/>
    <property type="match status" value="1"/>
</dbReference>
<dbReference type="Pfam" id="PF07724">
    <property type="entry name" value="AAA_2"/>
    <property type="match status" value="1"/>
</dbReference>
<dbReference type="Pfam" id="PF10431">
    <property type="entry name" value="ClpB_D2-small"/>
    <property type="match status" value="1"/>
</dbReference>
<dbReference type="SMART" id="SM00382">
    <property type="entry name" value="AAA"/>
    <property type="match status" value="1"/>
</dbReference>
<dbReference type="SMART" id="SM01086">
    <property type="entry name" value="ClpB_D2-small"/>
    <property type="match status" value="1"/>
</dbReference>
<dbReference type="SUPFAM" id="SSF52540">
    <property type="entry name" value="P-loop containing nucleoside triphosphate hydrolases"/>
    <property type="match status" value="1"/>
</dbReference>
<feature type="chain" id="PRO_0000160513" description="ATP-dependent protease ATPase subunit HslU">
    <location>
        <begin position="1"/>
        <end position="464"/>
    </location>
</feature>
<feature type="binding site" evidence="1">
    <location>
        <position position="18"/>
    </location>
    <ligand>
        <name>ATP</name>
        <dbReference type="ChEBI" id="CHEBI:30616"/>
    </ligand>
</feature>
<feature type="binding site" evidence="1">
    <location>
        <begin position="60"/>
        <end position="65"/>
    </location>
    <ligand>
        <name>ATP</name>
        <dbReference type="ChEBI" id="CHEBI:30616"/>
    </ligand>
</feature>
<feature type="binding site" evidence="1">
    <location>
        <position position="277"/>
    </location>
    <ligand>
        <name>ATP</name>
        <dbReference type="ChEBI" id="CHEBI:30616"/>
    </ligand>
</feature>
<feature type="binding site" evidence="1">
    <location>
        <position position="342"/>
    </location>
    <ligand>
        <name>ATP</name>
        <dbReference type="ChEBI" id="CHEBI:30616"/>
    </ligand>
</feature>
<feature type="binding site" evidence="1">
    <location>
        <position position="414"/>
    </location>
    <ligand>
        <name>ATP</name>
        <dbReference type="ChEBI" id="CHEBI:30616"/>
    </ligand>
</feature>
<accession>Q48735</accession>
<gene>
    <name evidence="1" type="primary">hslU</name>
</gene>
<protein>
    <recommendedName>
        <fullName evidence="1">ATP-dependent protease ATPase subunit HslU</fullName>
    </recommendedName>
    <alternativeName>
        <fullName evidence="1">Unfoldase HslU</fullName>
    </alternativeName>
</protein>
<evidence type="ECO:0000255" key="1">
    <source>
        <dbReference type="HAMAP-Rule" id="MF_00249"/>
    </source>
</evidence>
<evidence type="ECO:0000305" key="2"/>
<name>HSLU_LACLE</name>
<reference key="1">
    <citation type="journal article" date="1996" name="Curr. Microbiol.">
        <title>Molecular characterization of the xerC gene of Lactobacillus leichmannii encoding a site-specific recombinase and two adjacent heat shock genes.</title>
        <authorList>
            <person name="Becker J."/>
            <person name="Brendel M."/>
        </authorList>
    </citation>
    <scope>NUCLEOTIDE SEQUENCE [GENOMIC DNA]</scope>
    <source>
        <strain>ATCC 4797 / DSM 20076 / BCRC 10699 / JCM 1148 / NBRC 3073 / NCIMB 7854 / 326 / F59</strain>
    </source>
</reference>
<sequence>MREKTPKQIVDLLDKYIVGQNEAKKSVAIALYNRYRRAQLPEDVQKDITPKNILMAGPTGVGKTEIARRLADIVDAPFVKVEATKFTEVGYVGRDVESMVRDLANEAVRIVEKEEFVKVEGQAIRQANKTLVRLLVPGVKRNNRQNQMQQMQEMIQSLLAGGGMSEETEEVTDEIRNQRLSVAEKLDRGLLENEEVTIEVEQAPKANPMGDMMGQMGMDMSSMLGDMLPKKKVKRTLPVSQARKLLVQEEEKKLVNYDDIYQKAMDRAGQSGIIFIDEIDKITAADKRNSAGVSREGVQRDILPIVEGSTVSTKYGPLSTDHILFIAAGAFAESKPSDLIPELQGRFPIRVELDALTKDDFVRILKDPQNSLLKQYIALLKADGVDLVFTAEAVDKIAEIAFEVNQGTDNIGARRLATILEKLLEEVLYEGPDMEMGQITITQAYVEQKLSDIVKNKDLTKFIL</sequence>
<organism>
    <name type="scientific">Lactobacillus leichmannii</name>
    <dbReference type="NCBI Taxonomy" id="28039"/>
    <lineage>
        <taxon>Bacteria</taxon>
        <taxon>Bacillati</taxon>
        <taxon>Bacillota</taxon>
        <taxon>Bacilli</taxon>
        <taxon>Lactobacillales</taxon>
        <taxon>Lactobacillaceae</taxon>
        <taxon>Lactobacillus</taxon>
    </lineage>
</organism>
<keyword id="KW-0067">ATP-binding</keyword>
<keyword id="KW-0143">Chaperone</keyword>
<keyword id="KW-0963">Cytoplasm</keyword>
<keyword id="KW-0547">Nucleotide-binding</keyword>
<proteinExistence type="inferred from homology"/>